<feature type="chain" id="PRO_0000196336" description="Nodulation protein A">
    <location>
        <begin position="1"/>
        <end position="214"/>
    </location>
</feature>
<dbReference type="EC" id="2.3.1.-" evidence="1"/>
<dbReference type="EMBL" id="AF266748">
    <property type="protein sequence ID" value="AAG49150.1"/>
    <property type="molecule type" value="Genomic_DNA"/>
</dbReference>
<dbReference type="EMBL" id="CP001349">
    <property type="protein sequence ID" value="ACL58907.1"/>
    <property type="molecule type" value="Genomic_DNA"/>
</dbReference>
<dbReference type="RefSeq" id="WP_015930557.1">
    <property type="nucleotide sequence ID" value="NC_011894.1"/>
</dbReference>
<dbReference type="STRING" id="460265.Mnod_4025"/>
<dbReference type="KEGG" id="mno:Mnod_4025"/>
<dbReference type="eggNOG" id="COG3153">
    <property type="taxonomic scope" value="Bacteria"/>
</dbReference>
<dbReference type="HOGENOM" id="CLU_098284_0_0_5"/>
<dbReference type="OrthoDB" id="3573574at2"/>
<dbReference type="Proteomes" id="UP000008207">
    <property type="component" value="Chromosome"/>
</dbReference>
<dbReference type="GO" id="GO:0005829">
    <property type="term" value="C:cytosol"/>
    <property type="evidence" value="ECO:0007669"/>
    <property type="project" value="InterPro"/>
</dbReference>
<dbReference type="GO" id="GO:0016746">
    <property type="term" value="F:acyltransferase activity"/>
    <property type="evidence" value="ECO:0007669"/>
    <property type="project" value="UniProtKB-UniRule"/>
</dbReference>
<dbReference type="Gene3D" id="3.40.630.30">
    <property type="match status" value="1"/>
</dbReference>
<dbReference type="HAMAP" id="MF_00084">
    <property type="entry name" value="NodA"/>
    <property type="match status" value="1"/>
</dbReference>
<dbReference type="InterPro" id="IPR003484">
    <property type="entry name" value="NodA"/>
</dbReference>
<dbReference type="InterPro" id="IPR020567">
    <property type="entry name" value="Nodulation_prot_NodA_CS"/>
</dbReference>
<dbReference type="NCBIfam" id="TIGR04245">
    <property type="entry name" value="nodulat_NodA"/>
    <property type="match status" value="1"/>
</dbReference>
<dbReference type="NCBIfam" id="NF001974">
    <property type="entry name" value="PRK00756.1"/>
    <property type="match status" value="1"/>
</dbReference>
<dbReference type="Pfam" id="PF02474">
    <property type="entry name" value="NodA"/>
    <property type="match status" value="1"/>
</dbReference>
<dbReference type="PROSITE" id="PS01349">
    <property type="entry name" value="NODA"/>
    <property type="match status" value="1"/>
</dbReference>
<protein>
    <recommendedName>
        <fullName evidence="1">Nodulation protein A</fullName>
        <ecNumber evidence="1">2.3.1.-</ecNumber>
    </recommendedName>
</protein>
<proteinExistence type="inferred from homology"/>
<reference key="1">
    <citation type="journal article" date="2001" name="J. Bacteriol.">
        <title>Methylotrophic Methylobacterium bacteria nodulate and fix nitrogen in symbiosis with legumes.</title>
        <authorList>
            <person name="Sy A."/>
            <person name="Giraud E."/>
            <person name="Jourand P."/>
            <person name="Garcia N."/>
            <person name="Willems A."/>
            <person name="de Lajudie P."/>
            <person name="Prin Y."/>
            <person name="Neyra M."/>
            <person name="Gillis M."/>
            <person name="Boivin-Masson C."/>
            <person name="Dreyfus B."/>
        </authorList>
    </citation>
    <scope>NUCLEOTIDE SEQUENCE [GENOMIC DNA]</scope>
</reference>
<reference key="2">
    <citation type="submission" date="2009-01" db="EMBL/GenBank/DDBJ databases">
        <title>Complete sequence of chromosome of Methylobacterium nodulans ORS 2060.</title>
        <authorList>
            <consortium name="US DOE Joint Genome Institute"/>
            <person name="Lucas S."/>
            <person name="Copeland A."/>
            <person name="Lapidus A."/>
            <person name="Glavina del Rio T."/>
            <person name="Dalin E."/>
            <person name="Tice H."/>
            <person name="Bruce D."/>
            <person name="Goodwin L."/>
            <person name="Pitluck S."/>
            <person name="Sims D."/>
            <person name="Brettin T."/>
            <person name="Detter J.C."/>
            <person name="Han C."/>
            <person name="Larimer F."/>
            <person name="Land M."/>
            <person name="Hauser L."/>
            <person name="Kyrpides N."/>
            <person name="Ivanova N."/>
            <person name="Marx C.J."/>
            <person name="Richardson P."/>
        </authorList>
    </citation>
    <scope>NUCLEOTIDE SEQUENCE [LARGE SCALE GENOMIC DNA]</scope>
    <source>
        <strain>LMG 21967 / CNCM I-2342 / ORS 2060</strain>
    </source>
</reference>
<organism>
    <name type="scientific">Methylobacterium nodulans (strain LMG 21967 / CNCM I-2342 / ORS 2060)</name>
    <dbReference type="NCBI Taxonomy" id="460265"/>
    <lineage>
        <taxon>Bacteria</taxon>
        <taxon>Pseudomonadati</taxon>
        <taxon>Pseudomonadota</taxon>
        <taxon>Alphaproteobacteria</taxon>
        <taxon>Hyphomicrobiales</taxon>
        <taxon>Methylobacteriaceae</taxon>
        <taxon>Methylobacterium</taxon>
    </lineage>
</organism>
<keyword id="KW-0012">Acyltransferase</keyword>
<keyword id="KW-0963">Cytoplasm</keyword>
<keyword id="KW-0536">Nodulation</keyword>
<keyword id="KW-1185">Reference proteome</keyword>
<keyword id="KW-0808">Transferase</keyword>
<name>NODA_METNO</name>
<accession>Q9F0C9</accession>
<accession>B8ITJ1</accession>
<evidence type="ECO:0000255" key="1">
    <source>
        <dbReference type="HAMAP-Rule" id="MF_00084"/>
    </source>
</evidence>
<gene>
    <name evidence="1" type="primary">nodA</name>
    <name type="ordered locus">Mnod_4025</name>
</gene>
<comment type="function">
    <text evidence="1">N-acyltransferase required for nodulation. Acts in the production of a small, heat-stable compound (Nod) that stimulates mitosis in various plant protoplasts.</text>
</comment>
<comment type="subcellular location">
    <subcellularLocation>
        <location evidence="1">Cytoplasm</location>
    </subcellularLocation>
</comment>
<comment type="similarity">
    <text evidence="1">Belongs to the NodA family.</text>
</comment>
<sequence length="214" mass="23655">MRFPSDLCPSSGTGELSARSQVRWRLCWENELELADHAELAEFLRKAYNPSGTFNARPFEGGRSWAGARPEVRAIGYDSRGVAAHIAALRRFIKVGAVDLLVAELGLYAVRPDLEGLRISHSMLVMYPALKELGVPFGFGTVRHALQKHLTRLLGKAGLATIVSGVRVRSTLRDMRLDMPPTRVEDLLILVFPIGRPMSDWPAGTIIDRNGPEL</sequence>